<organism>
    <name type="scientific">Burkholderia thailandensis (strain ATCC 700388 / DSM 13276 / CCUG 48851 / CIP 106301 / E264)</name>
    <dbReference type="NCBI Taxonomy" id="271848"/>
    <lineage>
        <taxon>Bacteria</taxon>
        <taxon>Pseudomonadati</taxon>
        <taxon>Pseudomonadota</taxon>
        <taxon>Betaproteobacteria</taxon>
        <taxon>Burkholderiales</taxon>
        <taxon>Burkholderiaceae</taxon>
        <taxon>Burkholderia</taxon>
        <taxon>pseudomallei group</taxon>
    </lineage>
</organism>
<gene>
    <name evidence="1" type="primary">cheD2</name>
    <name type="ordered locus">BTH_II0160</name>
</gene>
<name>CHED2_BURTA</name>
<keyword id="KW-0145">Chemotaxis</keyword>
<keyword id="KW-0378">Hydrolase</keyword>
<feature type="chain" id="PRO_0000251018" description="Probable chemoreceptor glutamine deamidase CheD 2">
    <location>
        <begin position="1"/>
        <end position="195"/>
    </location>
</feature>
<evidence type="ECO:0000255" key="1">
    <source>
        <dbReference type="HAMAP-Rule" id="MF_01440"/>
    </source>
</evidence>
<reference key="1">
    <citation type="journal article" date="2005" name="BMC Genomics">
        <title>Bacterial genome adaptation to niches: divergence of the potential virulence genes in three Burkholderia species of different survival strategies.</title>
        <authorList>
            <person name="Kim H.S."/>
            <person name="Schell M.A."/>
            <person name="Yu Y."/>
            <person name="Ulrich R.L."/>
            <person name="Sarria S.H."/>
            <person name="Nierman W.C."/>
            <person name="DeShazer D."/>
        </authorList>
    </citation>
    <scope>NUCLEOTIDE SEQUENCE [LARGE SCALE GENOMIC DNA]</scope>
    <source>
        <strain>ATCC 700388 / DSM 13276 / CCUG 48851 / CIP 106301 / E264</strain>
    </source>
</reference>
<protein>
    <recommendedName>
        <fullName evidence="1">Probable chemoreceptor glutamine deamidase CheD 2</fullName>
        <ecNumber evidence="1">3.5.1.44</ecNumber>
    </recommendedName>
</protein>
<dbReference type="EC" id="3.5.1.44" evidence="1"/>
<dbReference type="EMBL" id="CP000085">
    <property type="protein sequence ID" value="ABC34144.1"/>
    <property type="molecule type" value="Genomic_DNA"/>
</dbReference>
<dbReference type="SMR" id="Q2T8Y7"/>
<dbReference type="KEGG" id="bte:BTH_II0160"/>
<dbReference type="HOGENOM" id="CLU_087854_0_0_4"/>
<dbReference type="Proteomes" id="UP000001930">
    <property type="component" value="Chromosome II"/>
</dbReference>
<dbReference type="GO" id="GO:0050568">
    <property type="term" value="F:protein-glutamine glutaminase activity"/>
    <property type="evidence" value="ECO:0007669"/>
    <property type="project" value="UniProtKB-UniRule"/>
</dbReference>
<dbReference type="GO" id="GO:0006935">
    <property type="term" value="P:chemotaxis"/>
    <property type="evidence" value="ECO:0007669"/>
    <property type="project" value="UniProtKB-UniRule"/>
</dbReference>
<dbReference type="CDD" id="cd16352">
    <property type="entry name" value="CheD"/>
    <property type="match status" value="1"/>
</dbReference>
<dbReference type="Gene3D" id="3.30.1330.200">
    <property type="match status" value="1"/>
</dbReference>
<dbReference type="HAMAP" id="MF_01440">
    <property type="entry name" value="CheD"/>
    <property type="match status" value="1"/>
</dbReference>
<dbReference type="InterPro" id="IPR038592">
    <property type="entry name" value="CheD-like_sf"/>
</dbReference>
<dbReference type="InterPro" id="IPR005659">
    <property type="entry name" value="Chemorcpt_Glu_NH3ase_CheD"/>
</dbReference>
<dbReference type="InterPro" id="IPR011324">
    <property type="entry name" value="Cytotoxic_necrot_fac-like_cat"/>
</dbReference>
<dbReference type="PANTHER" id="PTHR35147">
    <property type="entry name" value="CHEMORECEPTOR GLUTAMINE DEAMIDASE CHED-RELATED"/>
    <property type="match status" value="1"/>
</dbReference>
<dbReference type="PANTHER" id="PTHR35147:SF2">
    <property type="entry name" value="CHEMORECEPTOR GLUTAMINE DEAMIDASE CHED-RELATED"/>
    <property type="match status" value="1"/>
</dbReference>
<dbReference type="Pfam" id="PF03975">
    <property type="entry name" value="CheD"/>
    <property type="match status" value="1"/>
</dbReference>
<dbReference type="SUPFAM" id="SSF64438">
    <property type="entry name" value="CNF1/YfiH-like putative cysteine hydrolases"/>
    <property type="match status" value="1"/>
</dbReference>
<proteinExistence type="inferred from homology"/>
<sequence>MGYHFYFDREFGRQAVRVNPGGFAIASADVMLATVLGSCVSVCMFDSAARVGGMNHFMLPGSGNGARNDSLSSLYGVNAMELLINGLLRRGALKWRLRAKLFGGGCVMQSLSDTRIGERNAAFVRAYLDAEGIRSVGGDMLGTRPRRVCYFPSTGRALCKRLVRGSDVADIATSERAYDGDLARRLPVAGSVELF</sequence>
<accession>Q2T8Y7</accession>
<comment type="function">
    <text evidence="1">Probably deamidates glutamine residues to glutamate on methyl-accepting chemotaxis receptors (MCPs), playing an important role in chemotaxis.</text>
</comment>
<comment type="catalytic activity">
    <reaction evidence="1">
        <text>L-glutaminyl-[protein] + H2O = L-glutamyl-[protein] + NH4(+)</text>
        <dbReference type="Rhea" id="RHEA:16441"/>
        <dbReference type="Rhea" id="RHEA-COMP:10207"/>
        <dbReference type="Rhea" id="RHEA-COMP:10208"/>
        <dbReference type="ChEBI" id="CHEBI:15377"/>
        <dbReference type="ChEBI" id="CHEBI:28938"/>
        <dbReference type="ChEBI" id="CHEBI:29973"/>
        <dbReference type="ChEBI" id="CHEBI:30011"/>
        <dbReference type="EC" id="3.5.1.44"/>
    </reaction>
</comment>
<comment type="similarity">
    <text evidence="1">Belongs to the CheD family.</text>
</comment>